<dbReference type="EMBL" id="AF001033">
    <property type="protein sequence ID" value="AAB61278.1"/>
    <property type="molecule type" value="Genomic_DNA"/>
</dbReference>
<dbReference type="EMBL" id="CM002236">
    <property type="protein sequence ID" value="EAA34471.1"/>
    <property type="molecule type" value="Genomic_DNA"/>
</dbReference>
<dbReference type="PIR" id="T47216">
    <property type="entry name" value="T47216"/>
</dbReference>
<dbReference type="RefSeq" id="XP_963707.1">
    <property type="nucleotide sequence ID" value="XM_958614.3"/>
</dbReference>
<dbReference type="PDB" id="1KHI">
    <property type="method" value="X-ray"/>
    <property type="resolution" value="1.78 A"/>
    <property type="chains" value="A=1-176"/>
</dbReference>
<dbReference type="PDB" id="7ASI">
    <property type="method" value="X-ray"/>
    <property type="resolution" value="1.70 A"/>
    <property type="chains" value="A=1-176"/>
</dbReference>
<dbReference type="PDB" id="7ASX">
    <property type="method" value="X-ray"/>
    <property type="resolution" value="1.80 A"/>
    <property type="chains" value="A=1-176"/>
</dbReference>
<dbReference type="PDB" id="7NJH">
    <property type="method" value="X-ray"/>
    <property type="resolution" value="2.50 A"/>
    <property type="chains" value="A=1-176"/>
</dbReference>
<dbReference type="PDB" id="7NJI">
    <property type="method" value="X-ray"/>
    <property type="resolution" value="2.30 A"/>
    <property type="chains" value="A=1-176"/>
</dbReference>
<dbReference type="PDB" id="8C5K">
    <property type="method" value="X-ray"/>
    <property type="resolution" value="2.16 A"/>
    <property type="chains" value="A=1-176"/>
</dbReference>
<dbReference type="PDB" id="8CD4">
    <property type="method" value="X-ray"/>
    <property type="resolution" value="1.83 A"/>
    <property type="chains" value="A=1-176"/>
</dbReference>
<dbReference type="PDB" id="8CD5">
    <property type="method" value="X-ray"/>
    <property type="resolution" value="1.56 A"/>
    <property type="chains" value="A=1-176"/>
</dbReference>
<dbReference type="PDB" id="8CD6">
    <property type="method" value="X-ray"/>
    <property type="resolution" value="1.85 A"/>
    <property type="chains" value="A=2-176"/>
</dbReference>
<dbReference type="PDB" id="8CGX">
    <property type="method" value="X-ray"/>
    <property type="resolution" value="1.85 A"/>
    <property type="chains" value="A=1-176"/>
</dbReference>
<dbReference type="PDBsum" id="1KHI"/>
<dbReference type="PDBsum" id="7ASI"/>
<dbReference type="PDBsum" id="7ASX"/>
<dbReference type="PDBsum" id="7NJH"/>
<dbReference type="PDBsum" id="7NJI"/>
<dbReference type="PDBsum" id="8C5K"/>
<dbReference type="PDBsum" id="8CD4"/>
<dbReference type="PDBsum" id="8CD5"/>
<dbReference type="PDBsum" id="8CD6"/>
<dbReference type="PDBsum" id="8CGX"/>
<dbReference type="SASBDB" id="P87252"/>
<dbReference type="SMR" id="P87252"/>
<dbReference type="STRING" id="367110.P87252"/>
<dbReference type="PaxDb" id="5141-EFNCRP00000006501"/>
<dbReference type="EnsemblFungi" id="EAA34471">
    <property type="protein sequence ID" value="EAA34471"/>
    <property type="gene ID" value="NCU08332"/>
</dbReference>
<dbReference type="GeneID" id="3879856"/>
<dbReference type="KEGG" id="ncr:NCU08332"/>
<dbReference type="VEuPathDB" id="FungiDB:NCU08332"/>
<dbReference type="HOGENOM" id="CLU_021655_0_0_1"/>
<dbReference type="InParanoid" id="P87252"/>
<dbReference type="OMA" id="HEEPCVV"/>
<dbReference type="OrthoDB" id="9975114at2759"/>
<dbReference type="EvolutionaryTrace" id="P87252"/>
<dbReference type="Proteomes" id="UP000001805">
    <property type="component" value="Chromosome 1, Linkage Group I"/>
</dbReference>
<dbReference type="GO" id="GO:0030428">
    <property type="term" value="C:cell septum"/>
    <property type="evidence" value="ECO:0007669"/>
    <property type="project" value="UniProtKB-SubCell"/>
</dbReference>
<dbReference type="GO" id="GO:0140266">
    <property type="term" value="C:Woronin body"/>
    <property type="evidence" value="ECO:0000314"/>
    <property type="project" value="GO_Central"/>
</dbReference>
<dbReference type="GO" id="GO:0043022">
    <property type="term" value="F:ribosome binding"/>
    <property type="evidence" value="ECO:0007669"/>
    <property type="project" value="InterPro"/>
</dbReference>
<dbReference type="GO" id="GO:0003723">
    <property type="term" value="F:RNA binding"/>
    <property type="evidence" value="ECO:0007669"/>
    <property type="project" value="InterPro"/>
</dbReference>
<dbReference type="GO" id="GO:0003746">
    <property type="term" value="F:translation elongation factor activity"/>
    <property type="evidence" value="ECO:0000318"/>
    <property type="project" value="GO_Central"/>
</dbReference>
<dbReference type="GO" id="GO:0045901">
    <property type="term" value="P:positive regulation of translational elongation"/>
    <property type="evidence" value="ECO:0007669"/>
    <property type="project" value="InterPro"/>
</dbReference>
<dbReference type="GO" id="GO:0045905">
    <property type="term" value="P:positive regulation of translational termination"/>
    <property type="evidence" value="ECO:0007669"/>
    <property type="project" value="InterPro"/>
</dbReference>
<dbReference type="GO" id="GO:0006414">
    <property type="term" value="P:translational elongation"/>
    <property type="evidence" value="ECO:0000318"/>
    <property type="project" value="GO_Central"/>
</dbReference>
<dbReference type="CDD" id="cd04469">
    <property type="entry name" value="S1_Hex1"/>
    <property type="match status" value="1"/>
</dbReference>
<dbReference type="FunFam" id="2.40.50.140:FF:000229">
    <property type="entry name" value="Woronin body major protein"/>
    <property type="match status" value="1"/>
</dbReference>
<dbReference type="FunFam" id="2.30.30.30:FF:000033">
    <property type="entry name" value="Woronin body major protein HEX1"/>
    <property type="match status" value="1"/>
</dbReference>
<dbReference type="Gene3D" id="2.30.30.30">
    <property type="match status" value="1"/>
</dbReference>
<dbReference type="Gene3D" id="2.40.50.140">
    <property type="entry name" value="Nucleic acid-binding proteins"/>
    <property type="match status" value="1"/>
</dbReference>
<dbReference type="InterPro" id="IPR037318">
    <property type="entry name" value="Hex1_S1"/>
</dbReference>
<dbReference type="InterPro" id="IPR001884">
    <property type="entry name" value="IF5A-like"/>
</dbReference>
<dbReference type="InterPro" id="IPR048670">
    <property type="entry name" value="IF5A-like_N"/>
</dbReference>
<dbReference type="InterPro" id="IPR012340">
    <property type="entry name" value="NA-bd_OB-fold"/>
</dbReference>
<dbReference type="InterPro" id="IPR014722">
    <property type="entry name" value="Rib_uL2_dom2"/>
</dbReference>
<dbReference type="InterPro" id="IPR020189">
    <property type="entry name" value="Transl_elong_IF5A_C"/>
</dbReference>
<dbReference type="InterPro" id="IPR008991">
    <property type="entry name" value="Translation_prot_SH3-like_sf"/>
</dbReference>
<dbReference type="PANTHER" id="PTHR11673">
    <property type="entry name" value="TRANSLATION INITIATION FACTOR 5A FAMILY MEMBER"/>
    <property type="match status" value="1"/>
</dbReference>
<dbReference type="Pfam" id="PF01287">
    <property type="entry name" value="eIF-5a"/>
    <property type="match status" value="1"/>
</dbReference>
<dbReference type="Pfam" id="PF21485">
    <property type="entry name" value="IF5A-like_N"/>
    <property type="match status" value="1"/>
</dbReference>
<dbReference type="SUPFAM" id="SSF50249">
    <property type="entry name" value="Nucleic acid-binding proteins"/>
    <property type="match status" value="1"/>
</dbReference>
<dbReference type="SUPFAM" id="SSF50104">
    <property type="entry name" value="Translation proteins SH3-like domain"/>
    <property type="match status" value="1"/>
</dbReference>
<proteinExistence type="evidence at protein level"/>
<reference key="1">
    <citation type="journal article" date="2000" name="Fungal Genet. Biol.">
        <title>Hex-1, a gene unique to filamentous fungi, encodes the major protein of the Woronin body and functions as a plug for septal pores.</title>
        <authorList>
            <person name="Tenney K."/>
            <person name="Hunt I."/>
            <person name="Sweigard J."/>
            <person name="Pounder J.I."/>
            <person name="McClain C."/>
            <person name="Bowman E.J."/>
            <person name="Bowman B.J."/>
        </authorList>
    </citation>
    <scope>NUCLEOTIDE SEQUENCE [GENOMIC DNA]</scope>
    <scope>PARTIAL PROTEIN SEQUENCE</scope>
    <scope>FUNCTION</scope>
    <scope>DISRUPTION PHENOTYPE</scope>
    <scope>SUBCELLULAR LOCATION</scope>
    <scope>SUBUNIT</scope>
</reference>
<reference key="2">
    <citation type="journal article" date="2003" name="Nature">
        <title>The genome sequence of the filamentous fungus Neurospora crassa.</title>
        <authorList>
            <person name="Galagan J.E."/>
            <person name="Calvo S.E."/>
            <person name="Borkovich K.A."/>
            <person name="Selker E.U."/>
            <person name="Read N.D."/>
            <person name="Jaffe D.B."/>
            <person name="FitzHugh W."/>
            <person name="Ma L.-J."/>
            <person name="Smirnov S."/>
            <person name="Purcell S."/>
            <person name="Rehman B."/>
            <person name="Elkins T."/>
            <person name="Engels R."/>
            <person name="Wang S."/>
            <person name="Nielsen C.B."/>
            <person name="Butler J."/>
            <person name="Endrizzi M."/>
            <person name="Qui D."/>
            <person name="Ianakiev P."/>
            <person name="Bell-Pedersen D."/>
            <person name="Nelson M.A."/>
            <person name="Werner-Washburne M."/>
            <person name="Selitrennikoff C.P."/>
            <person name="Kinsey J.A."/>
            <person name="Braun E.L."/>
            <person name="Zelter A."/>
            <person name="Schulte U."/>
            <person name="Kothe G.O."/>
            <person name="Jedd G."/>
            <person name="Mewes H.-W."/>
            <person name="Staben C."/>
            <person name="Marcotte E."/>
            <person name="Greenberg D."/>
            <person name="Roy A."/>
            <person name="Foley K."/>
            <person name="Naylor J."/>
            <person name="Stange-Thomann N."/>
            <person name="Barrett R."/>
            <person name="Gnerre S."/>
            <person name="Kamal M."/>
            <person name="Kamvysselis M."/>
            <person name="Mauceli E.W."/>
            <person name="Bielke C."/>
            <person name="Rudd S."/>
            <person name="Frishman D."/>
            <person name="Krystofova S."/>
            <person name="Rasmussen C."/>
            <person name="Metzenberg R.L."/>
            <person name="Perkins D.D."/>
            <person name="Kroken S."/>
            <person name="Cogoni C."/>
            <person name="Macino G."/>
            <person name="Catcheside D.E.A."/>
            <person name="Li W."/>
            <person name="Pratt R.J."/>
            <person name="Osmani S.A."/>
            <person name="DeSouza C.P.C."/>
            <person name="Glass N.L."/>
            <person name="Orbach M.J."/>
            <person name="Berglund J.A."/>
            <person name="Voelker R."/>
            <person name="Yarden O."/>
            <person name="Plamann M."/>
            <person name="Seiler S."/>
            <person name="Dunlap J.C."/>
            <person name="Radford A."/>
            <person name="Aramayo R."/>
            <person name="Natvig D.O."/>
            <person name="Alex L.A."/>
            <person name="Mannhaupt G."/>
            <person name="Ebbole D.J."/>
            <person name="Freitag M."/>
            <person name="Paulsen I."/>
            <person name="Sachs M.S."/>
            <person name="Lander E.S."/>
            <person name="Nusbaum C."/>
            <person name="Birren B.W."/>
        </authorList>
    </citation>
    <scope>NUCLEOTIDE SEQUENCE [LARGE SCALE GENOMIC DNA]</scope>
    <source>
        <strain>ATCC 24698 / 74-OR23-1A / CBS 708.71 / DSM 1257 / FGSC 987</strain>
    </source>
</reference>
<reference key="3">
    <citation type="journal article" date="2000" name="Nat. Cell Biol.">
        <title>A new self-assembled peroxisomal vesicle required for efficient resealing of the plasma membrane.</title>
        <authorList>
            <person name="Jedd G."/>
            <person name="Chua N.-H."/>
        </authorList>
    </citation>
    <scope>FUNCTION</scope>
    <scope>DISRUPTION PHENOTYPE</scope>
    <scope>SUBCELLULAR LOCATION</scope>
    <scope>SUBUNIT</scope>
</reference>
<reference key="4">
    <citation type="journal article" date="2003" name="Nat. Struct. Biol.">
        <title>A HEX-1 crystal lattice required for Woronin body function in Neurospora crassa.</title>
        <authorList>
            <person name="Yuan P."/>
            <person name="Jedd G."/>
            <person name="Kumaran D."/>
            <person name="Swaminathan S."/>
            <person name="Shio H."/>
            <person name="Hewitt D."/>
            <person name="Chua N.-H."/>
            <person name="Swaminathan K."/>
        </authorList>
    </citation>
    <scope>X-RAY CRYSTALLOGRAPHY (1.8 ANGSTROMS)</scope>
    <scope>SUBUNIT</scope>
    <scope>FUNCTION</scope>
    <scope>MUTAGENESIS OF HIS-39; GLN-127; LYS-143 AND ARG-149</scope>
</reference>
<evidence type="ECO:0000256" key="1">
    <source>
        <dbReference type="SAM" id="MobiDB-lite"/>
    </source>
</evidence>
<evidence type="ECO:0000269" key="2">
    <source>
    </source>
</evidence>
<evidence type="ECO:0000269" key="3">
    <source>
    </source>
</evidence>
<evidence type="ECO:0000269" key="4">
    <source>
    </source>
</evidence>
<evidence type="ECO:0000303" key="5">
    <source>
    </source>
</evidence>
<evidence type="ECO:0000305" key="6"/>
<evidence type="ECO:0000305" key="7">
    <source>
    </source>
</evidence>
<evidence type="ECO:0007829" key="8">
    <source>
        <dbReference type="PDB" id="7ASX"/>
    </source>
</evidence>
<evidence type="ECO:0007829" key="9">
    <source>
        <dbReference type="PDB" id="8CD5"/>
    </source>
</evidence>
<keyword id="KW-0002">3D-structure</keyword>
<keyword id="KW-0903">Direct protein sequencing</keyword>
<keyword id="KW-1185">Reference proteome</keyword>
<protein>
    <recommendedName>
        <fullName evidence="5">Woronin body major protein</fullName>
    </recommendedName>
</protein>
<gene>
    <name evidence="5" type="primary">hex-1</name>
    <name type="ORF">NCU08332</name>
</gene>
<sequence>MGYYDDDAHGHVEADAAPRATTGTGTGSASQTVTIPCHHIRLGDILILQGRPCQVIRISTSAATGQHRYLGVDLFTKQLHEESSFVSNPAPSVVVQTMLGPVFKQYRVLDMQDGSIVAMTETGDVKQNLPVIDQSSLWNRLQKAFESGRGSVRVLVVSDHGREMAVDMKVVHGSRL</sequence>
<name>HEX1_NEUCR</name>
<accession>P87252</accession>
<accession>Q7RV36</accession>
<feature type="propeptide" id="PRO_0000007793">
    <location>
        <begin position="1"/>
        <end position="16"/>
    </location>
</feature>
<feature type="chain" id="PRO_0000007794" description="Woronin body major protein">
    <location>
        <begin position="17"/>
        <end position="176"/>
    </location>
</feature>
<feature type="region of interest" description="Disordered" evidence="1">
    <location>
        <begin position="1"/>
        <end position="31"/>
    </location>
</feature>
<feature type="short sequence motif" description="Microbody targeting signal" evidence="7">
    <location>
        <begin position="174"/>
        <end position="176"/>
    </location>
</feature>
<feature type="compositionally biased region" description="Basic and acidic residues" evidence="1">
    <location>
        <begin position="1"/>
        <end position="16"/>
    </location>
</feature>
<feature type="mutagenesis site" description="Abolishes the ability to self-assemble." evidence="4">
    <original>H</original>
    <variation>G</variation>
    <location>
        <position position="39"/>
    </location>
</feature>
<feature type="mutagenesis site" description="Abolishes the ability to self-assemble." evidence="4">
    <original>Q</original>
    <variation>A</variation>
    <location>
        <position position="127"/>
    </location>
</feature>
<feature type="mutagenesis site" description="Does not affect self-assembly." evidence="4">
    <original>K</original>
    <variation>A</variation>
    <location>
        <position position="143"/>
    </location>
</feature>
<feature type="mutagenesis site" description="Does not affect self-assembly." evidence="4">
    <original>R</original>
    <variation>A</variation>
    <location>
        <position position="149"/>
    </location>
</feature>
<feature type="strand" evidence="9">
    <location>
        <begin position="32"/>
        <end position="36"/>
    </location>
</feature>
<feature type="helix" evidence="9">
    <location>
        <begin position="37"/>
        <end position="39"/>
    </location>
</feature>
<feature type="strand" evidence="9">
    <location>
        <begin position="45"/>
        <end position="48"/>
    </location>
</feature>
<feature type="strand" evidence="9">
    <location>
        <begin position="51"/>
        <end position="60"/>
    </location>
</feature>
<feature type="turn" evidence="9">
    <location>
        <begin position="62"/>
        <end position="64"/>
    </location>
</feature>
<feature type="strand" evidence="9">
    <location>
        <begin position="67"/>
        <end position="73"/>
    </location>
</feature>
<feature type="turn" evidence="9">
    <location>
        <begin position="74"/>
        <end position="76"/>
    </location>
</feature>
<feature type="strand" evidence="9">
    <location>
        <begin position="79"/>
        <end position="83"/>
    </location>
</feature>
<feature type="strand" evidence="9">
    <location>
        <begin position="85"/>
        <end position="90"/>
    </location>
</feature>
<feature type="strand" evidence="9">
    <location>
        <begin position="93"/>
        <end position="101"/>
    </location>
</feature>
<feature type="strand" evidence="9">
    <location>
        <begin position="104"/>
        <end position="112"/>
    </location>
</feature>
<feature type="strand" evidence="9">
    <location>
        <begin position="115"/>
        <end position="119"/>
    </location>
</feature>
<feature type="strand" evidence="9">
    <location>
        <begin position="125"/>
        <end position="131"/>
    </location>
</feature>
<feature type="strand" evidence="8">
    <location>
        <begin position="134"/>
        <end position="136"/>
    </location>
</feature>
<feature type="helix" evidence="9">
    <location>
        <begin position="137"/>
        <end position="146"/>
    </location>
</feature>
<feature type="helix" evidence="9">
    <location>
        <begin position="149"/>
        <end position="151"/>
    </location>
</feature>
<feature type="strand" evidence="9">
    <location>
        <begin position="152"/>
        <end position="159"/>
    </location>
</feature>
<feature type="strand" evidence="9">
    <location>
        <begin position="162"/>
        <end position="170"/>
    </location>
</feature>
<organism>
    <name type="scientific">Neurospora crassa (strain ATCC 24698 / 74-OR23-1A / CBS 708.71 / DSM 1257 / FGSC 987)</name>
    <dbReference type="NCBI Taxonomy" id="367110"/>
    <lineage>
        <taxon>Eukaryota</taxon>
        <taxon>Fungi</taxon>
        <taxon>Dikarya</taxon>
        <taxon>Ascomycota</taxon>
        <taxon>Pezizomycotina</taxon>
        <taxon>Sordariomycetes</taxon>
        <taxon>Sordariomycetidae</taxon>
        <taxon>Sordariales</taxon>
        <taxon>Sordariaceae</taxon>
        <taxon>Neurospora</taxon>
    </lineage>
</organism>
<comment type="function">
    <text evidence="2 3">Major component of Woronin bodies, fungal-specific organelles that occlude septal pores in order to separate intact from damaged compartments (PubMed:10783241, PubMed:11273682). Hex-1 binds directly or indirectly to the Woronin body tether that in turn is anchored at the rim of the septal pore (PubMed:10783241, PubMed:11273682).</text>
</comment>
<comment type="subunit">
    <text evidence="2 3 4">Forms oligomers (PubMed:10783241, PubMed:11273682). Self-assembles into hexagonal rods (PubMed:10783241, PubMed:12640443).</text>
</comment>
<comment type="subcellular location">
    <subcellularLocation>
        <location evidence="2 3">Cell septum</location>
    </subcellularLocation>
    <text evidence="2 3">Localizes at Woronin bodies, fungal-specific organelles that plug the septal pore in case of physical damage.</text>
</comment>
<comment type="disruption phenotype">
    <text evidence="2 3">Impairs plugging of septal pores and leads to the loss of cytoplasm in hyphae severed by lightly drawing a scalpel blade.</text>
</comment>
<comment type="similarity">
    <text evidence="6">Belongs to the eIF-5A family. Hex1 subfamily.</text>
</comment>
<comment type="online information" name="Protein Spotlight">
    <link uri="https://www.proteinspotlight.org/back_issues/255/"/>
    <text>On the end of a leash - Issue 255 of February 2023</text>
</comment>